<name>APT_XANOR</name>
<evidence type="ECO:0000255" key="1">
    <source>
        <dbReference type="HAMAP-Rule" id="MF_00004"/>
    </source>
</evidence>
<protein>
    <recommendedName>
        <fullName evidence="1">Adenine phosphoribosyltransferase</fullName>
        <shortName evidence="1">APRT</shortName>
        <ecNumber evidence="1">2.4.2.7</ecNumber>
    </recommendedName>
</protein>
<proteinExistence type="inferred from homology"/>
<reference key="1">
    <citation type="journal article" date="2005" name="Nucleic Acids Res.">
        <title>The genome sequence of Xanthomonas oryzae pathovar oryzae KACC10331, the bacterial blight pathogen of rice.</title>
        <authorList>
            <person name="Lee B.-M."/>
            <person name="Park Y.-J."/>
            <person name="Park D.-S."/>
            <person name="Kang H.-W."/>
            <person name="Kim J.-G."/>
            <person name="Song E.-S."/>
            <person name="Park I.-C."/>
            <person name="Yoon U.-H."/>
            <person name="Hahn J.-H."/>
            <person name="Koo B.-S."/>
            <person name="Lee G.-B."/>
            <person name="Kim H."/>
            <person name="Park H.-S."/>
            <person name="Yoon K.-O."/>
            <person name="Kim J.-H."/>
            <person name="Jung C.-H."/>
            <person name="Koh N.-H."/>
            <person name="Seo J.-S."/>
            <person name="Go S.-J."/>
        </authorList>
    </citation>
    <scope>NUCLEOTIDE SEQUENCE [LARGE SCALE GENOMIC DNA]</scope>
    <source>
        <strain>KACC10331 / KXO85</strain>
    </source>
</reference>
<sequence length="186" mass="19983">MTDCSRCAGTNASGPNHWSERIRDIVDFPKPGIVFKDITPLLSDGPDFASALDEMAQPWRTTPLDAVLGIEALGFILGAALARELRTGFVPVRKPGKLPGRTLIREYALEYGTDRIEMHEGALPRGARVLIVDDVLATGGTLRAALGLAAQLELEIVGAAVLVELLALQGRQKWADDVPLLATLSF</sequence>
<comment type="function">
    <text evidence="1">Catalyzes a salvage reaction resulting in the formation of AMP, that is energically less costly than de novo synthesis.</text>
</comment>
<comment type="catalytic activity">
    <reaction evidence="1">
        <text>AMP + diphosphate = 5-phospho-alpha-D-ribose 1-diphosphate + adenine</text>
        <dbReference type="Rhea" id="RHEA:16609"/>
        <dbReference type="ChEBI" id="CHEBI:16708"/>
        <dbReference type="ChEBI" id="CHEBI:33019"/>
        <dbReference type="ChEBI" id="CHEBI:58017"/>
        <dbReference type="ChEBI" id="CHEBI:456215"/>
        <dbReference type="EC" id="2.4.2.7"/>
    </reaction>
</comment>
<comment type="pathway">
    <text evidence="1">Purine metabolism; AMP biosynthesis via salvage pathway; AMP from adenine: step 1/1.</text>
</comment>
<comment type="subunit">
    <text evidence="1">Homodimer.</text>
</comment>
<comment type="subcellular location">
    <subcellularLocation>
        <location evidence="1">Cytoplasm</location>
    </subcellularLocation>
</comment>
<comment type="similarity">
    <text evidence="1">Belongs to the purine/pyrimidine phosphoribosyltransferase family.</text>
</comment>
<organism>
    <name type="scientific">Xanthomonas oryzae pv. oryzae (strain KACC10331 / KXO85)</name>
    <dbReference type="NCBI Taxonomy" id="291331"/>
    <lineage>
        <taxon>Bacteria</taxon>
        <taxon>Pseudomonadati</taxon>
        <taxon>Pseudomonadota</taxon>
        <taxon>Gammaproteobacteria</taxon>
        <taxon>Lysobacterales</taxon>
        <taxon>Lysobacteraceae</taxon>
        <taxon>Xanthomonas</taxon>
    </lineage>
</organism>
<accession>Q5GZA0</accession>
<gene>
    <name evidence="1" type="primary">apt</name>
    <name type="ordered locus">XOO2717</name>
</gene>
<keyword id="KW-0963">Cytoplasm</keyword>
<keyword id="KW-0328">Glycosyltransferase</keyword>
<keyword id="KW-0660">Purine salvage</keyword>
<keyword id="KW-1185">Reference proteome</keyword>
<keyword id="KW-0808">Transferase</keyword>
<feature type="chain" id="PRO_0000149491" description="Adenine phosphoribosyltransferase">
    <location>
        <begin position="1"/>
        <end position="186"/>
    </location>
</feature>
<dbReference type="EC" id="2.4.2.7" evidence="1"/>
<dbReference type="EMBL" id="AE013598">
    <property type="protein sequence ID" value="AAW75971.1"/>
    <property type="molecule type" value="Genomic_DNA"/>
</dbReference>
<dbReference type="SMR" id="Q5GZA0"/>
<dbReference type="STRING" id="291331.XOO2717"/>
<dbReference type="KEGG" id="xoo:XOO2717"/>
<dbReference type="HOGENOM" id="CLU_063339_3_0_6"/>
<dbReference type="UniPathway" id="UPA00588">
    <property type="reaction ID" value="UER00646"/>
</dbReference>
<dbReference type="Proteomes" id="UP000006735">
    <property type="component" value="Chromosome"/>
</dbReference>
<dbReference type="GO" id="GO:0005737">
    <property type="term" value="C:cytoplasm"/>
    <property type="evidence" value="ECO:0007669"/>
    <property type="project" value="UniProtKB-SubCell"/>
</dbReference>
<dbReference type="GO" id="GO:0002055">
    <property type="term" value="F:adenine binding"/>
    <property type="evidence" value="ECO:0007669"/>
    <property type="project" value="TreeGrafter"/>
</dbReference>
<dbReference type="GO" id="GO:0003999">
    <property type="term" value="F:adenine phosphoribosyltransferase activity"/>
    <property type="evidence" value="ECO:0007669"/>
    <property type="project" value="UniProtKB-UniRule"/>
</dbReference>
<dbReference type="GO" id="GO:0016208">
    <property type="term" value="F:AMP binding"/>
    <property type="evidence" value="ECO:0007669"/>
    <property type="project" value="TreeGrafter"/>
</dbReference>
<dbReference type="GO" id="GO:0006168">
    <property type="term" value="P:adenine salvage"/>
    <property type="evidence" value="ECO:0007669"/>
    <property type="project" value="InterPro"/>
</dbReference>
<dbReference type="GO" id="GO:0044209">
    <property type="term" value="P:AMP salvage"/>
    <property type="evidence" value="ECO:0007669"/>
    <property type="project" value="UniProtKB-UniRule"/>
</dbReference>
<dbReference type="GO" id="GO:0006166">
    <property type="term" value="P:purine ribonucleoside salvage"/>
    <property type="evidence" value="ECO:0007669"/>
    <property type="project" value="UniProtKB-KW"/>
</dbReference>
<dbReference type="CDD" id="cd06223">
    <property type="entry name" value="PRTases_typeI"/>
    <property type="match status" value="1"/>
</dbReference>
<dbReference type="FunFam" id="3.40.50.2020:FF:000021">
    <property type="entry name" value="Adenine phosphoribosyltransferase"/>
    <property type="match status" value="1"/>
</dbReference>
<dbReference type="Gene3D" id="3.40.50.2020">
    <property type="match status" value="1"/>
</dbReference>
<dbReference type="HAMAP" id="MF_00004">
    <property type="entry name" value="Aden_phosphoribosyltr"/>
    <property type="match status" value="1"/>
</dbReference>
<dbReference type="InterPro" id="IPR005764">
    <property type="entry name" value="Ade_phspho_trans"/>
</dbReference>
<dbReference type="InterPro" id="IPR000836">
    <property type="entry name" value="PRibTrfase_dom"/>
</dbReference>
<dbReference type="InterPro" id="IPR029057">
    <property type="entry name" value="PRTase-like"/>
</dbReference>
<dbReference type="InterPro" id="IPR050054">
    <property type="entry name" value="UPRTase/APRTase"/>
</dbReference>
<dbReference type="NCBIfam" id="TIGR01090">
    <property type="entry name" value="apt"/>
    <property type="match status" value="1"/>
</dbReference>
<dbReference type="NCBIfam" id="NF002634">
    <property type="entry name" value="PRK02304.1-3"/>
    <property type="match status" value="1"/>
</dbReference>
<dbReference type="NCBIfam" id="NF002636">
    <property type="entry name" value="PRK02304.1-5"/>
    <property type="match status" value="1"/>
</dbReference>
<dbReference type="PANTHER" id="PTHR32315">
    <property type="entry name" value="ADENINE PHOSPHORIBOSYLTRANSFERASE"/>
    <property type="match status" value="1"/>
</dbReference>
<dbReference type="PANTHER" id="PTHR32315:SF3">
    <property type="entry name" value="ADENINE PHOSPHORIBOSYLTRANSFERASE"/>
    <property type="match status" value="1"/>
</dbReference>
<dbReference type="Pfam" id="PF00156">
    <property type="entry name" value="Pribosyltran"/>
    <property type="match status" value="1"/>
</dbReference>
<dbReference type="SUPFAM" id="SSF53271">
    <property type="entry name" value="PRTase-like"/>
    <property type="match status" value="1"/>
</dbReference>
<dbReference type="PROSITE" id="PS00103">
    <property type="entry name" value="PUR_PYR_PR_TRANSFER"/>
    <property type="match status" value="1"/>
</dbReference>